<feature type="chain" id="PRO_0000209176" description="Protein Smg homolog">
    <location>
        <begin position="1"/>
        <end position="152"/>
    </location>
</feature>
<dbReference type="EMBL" id="AL954747">
    <property type="protein sequence ID" value="CAD85878.1"/>
    <property type="molecule type" value="Genomic_DNA"/>
</dbReference>
<dbReference type="RefSeq" id="WP_011112498.1">
    <property type="nucleotide sequence ID" value="NC_004757.1"/>
</dbReference>
<dbReference type="SMR" id="Q82TD1"/>
<dbReference type="STRING" id="228410.NE1967"/>
<dbReference type="DNASU" id="1082925"/>
<dbReference type="GeneID" id="87105120"/>
<dbReference type="KEGG" id="neu:NE1967"/>
<dbReference type="eggNOG" id="COG2922">
    <property type="taxonomic scope" value="Bacteria"/>
</dbReference>
<dbReference type="HOGENOM" id="CLU_133242_0_0_4"/>
<dbReference type="OrthoDB" id="5297467at2"/>
<dbReference type="PhylomeDB" id="Q82TD1"/>
<dbReference type="Proteomes" id="UP000001416">
    <property type="component" value="Chromosome"/>
</dbReference>
<dbReference type="HAMAP" id="MF_00598">
    <property type="entry name" value="Smg"/>
    <property type="match status" value="1"/>
</dbReference>
<dbReference type="InterPro" id="IPR007456">
    <property type="entry name" value="Smg"/>
</dbReference>
<dbReference type="PANTHER" id="PTHR38692">
    <property type="entry name" value="PROTEIN SMG"/>
    <property type="match status" value="1"/>
</dbReference>
<dbReference type="PANTHER" id="PTHR38692:SF1">
    <property type="entry name" value="PROTEIN SMG"/>
    <property type="match status" value="1"/>
</dbReference>
<dbReference type="Pfam" id="PF04361">
    <property type="entry name" value="DUF494"/>
    <property type="match status" value="1"/>
</dbReference>
<name>SMG_NITEU</name>
<reference key="1">
    <citation type="journal article" date="2003" name="J. Bacteriol.">
        <title>Complete genome sequence of the ammonia-oxidizing bacterium and obligate chemolithoautotroph Nitrosomonas europaea.</title>
        <authorList>
            <person name="Chain P."/>
            <person name="Lamerdin J.E."/>
            <person name="Larimer F.W."/>
            <person name="Regala W."/>
            <person name="Lao V."/>
            <person name="Land M.L."/>
            <person name="Hauser L."/>
            <person name="Hooper A.B."/>
            <person name="Klotz M.G."/>
            <person name="Norton J."/>
            <person name="Sayavedra-Soto L.A."/>
            <person name="Arciero D.M."/>
            <person name="Hommes N.G."/>
            <person name="Whittaker M.M."/>
            <person name="Arp D.J."/>
        </authorList>
    </citation>
    <scope>NUCLEOTIDE SEQUENCE [LARGE SCALE GENOMIC DNA]</scope>
    <source>
        <strain>ATCC 19718 / CIP 103999 / KCTC 2705 / NBRC 14298</strain>
    </source>
</reference>
<proteinExistence type="inferred from homology"/>
<sequence length="152" mass="17495">MFDILVYLFENYFDAGNCPDSATLTRKLTMAGFDDEEITLALDWLSDLSRHDEEGYLAGLAESDSMRHFTEEEMEIIDTEGRGFIFFLEQAGVINPLQRELLIDRVIRMDGDTASIEKIKLVVLFDLWIQNQLTDRSIVEGLFVVSDSHQRH</sequence>
<comment type="similarity">
    <text evidence="1">Belongs to the Smg family.</text>
</comment>
<evidence type="ECO:0000255" key="1">
    <source>
        <dbReference type="HAMAP-Rule" id="MF_00598"/>
    </source>
</evidence>
<organism>
    <name type="scientific">Nitrosomonas europaea (strain ATCC 19718 / CIP 103999 / KCTC 2705 / NBRC 14298)</name>
    <dbReference type="NCBI Taxonomy" id="228410"/>
    <lineage>
        <taxon>Bacteria</taxon>
        <taxon>Pseudomonadati</taxon>
        <taxon>Pseudomonadota</taxon>
        <taxon>Betaproteobacteria</taxon>
        <taxon>Nitrosomonadales</taxon>
        <taxon>Nitrosomonadaceae</taxon>
        <taxon>Nitrosomonas</taxon>
    </lineage>
</organism>
<accession>Q82TD1</accession>
<keyword id="KW-1185">Reference proteome</keyword>
<gene>
    <name evidence="1" type="primary">smg</name>
    <name type="ordered locus">NE1967</name>
</gene>
<protein>
    <recommendedName>
        <fullName evidence="1">Protein Smg homolog</fullName>
    </recommendedName>
</protein>